<keyword id="KW-0687">Ribonucleoprotein</keyword>
<keyword id="KW-0689">Ribosomal protein</keyword>
<protein>
    <recommendedName>
        <fullName evidence="1">Large ribosomal subunit protein bL32</fullName>
    </recommendedName>
    <alternativeName>
        <fullName evidence="3">50S ribosomal protein L32</fullName>
    </alternativeName>
</protein>
<gene>
    <name evidence="1" type="primary">rpmF</name>
    <name type="ordered locus">msl3782</name>
</gene>
<feature type="chain" id="PRO_0000172392" description="Large ribosomal subunit protein bL32">
    <location>
        <begin position="1"/>
        <end position="60"/>
    </location>
</feature>
<feature type="region of interest" description="Disordered" evidence="2">
    <location>
        <begin position="1"/>
        <end position="60"/>
    </location>
</feature>
<feature type="compositionally biased region" description="Basic residues" evidence="2">
    <location>
        <begin position="1"/>
        <end position="16"/>
    </location>
</feature>
<feature type="compositionally biased region" description="Basic and acidic residues" evidence="2">
    <location>
        <begin position="28"/>
        <end position="44"/>
    </location>
</feature>
<comment type="similarity">
    <text evidence="1">Belongs to the bacterial ribosomal protein bL32 family.</text>
</comment>
<evidence type="ECO:0000255" key="1">
    <source>
        <dbReference type="HAMAP-Rule" id="MF_00340"/>
    </source>
</evidence>
<evidence type="ECO:0000256" key="2">
    <source>
        <dbReference type="SAM" id="MobiDB-lite"/>
    </source>
</evidence>
<evidence type="ECO:0000305" key="3"/>
<reference key="1">
    <citation type="journal article" date="2000" name="DNA Res.">
        <title>Complete genome structure of the nitrogen-fixing symbiotic bacterium Mesorhizobium loti.</title>
        <authorList>
            <person name="Kaneko T."/>
            <person name="Nakamura Y."/>
            <person name="Sato S."/>
            <person name="Asamizu E."/>
            <person name="Kato T."/>
            <person name="Sasamoto S."/>
            <person name="Watanabe A."/>
            <person name="Idesawa K."/>
            <person name="Ishikawa A."/>
            <person name="Kawashima K."/>
            <person name="Kimura T."/>
            <person name="Kishida Y."/>
            <person name="Kiyokawa C."/>
            <person name="Kohara M."/>
            <person name="Matsumoto M."/>
            <person name="Matsuno A."/>
            <person name="Mochizuki Y."/>
            <person name="Nakayama S."/>
            <person name="Nakazaki N."/>
            <person name="Shimpo S."/>
            <person name="Sugimoto M."/>
            <person name="Takeuchi C."/>
            <person name="Yamada M."/>
            <person name="Tabata S."/>
        </authorList>
    </citation>
    <scope>NUCLEOTIDE SEQUENCE [LARGE SCALE GENOMIC DNA]</scope>
    <source>
        <strain>LMG 29417 / CECT 9101 / MAFF 303099</strain>
    </source>
</reference>
<name>RL32_RHILO</name>
<sequence length="60" mass="6853">MAVPKRKTSPSKRGMRRSADALKAPTYVEDKNSGEMRRPHHIDLKTGMYRGRQVLTPKES</sequence>
<dbReference type="EMBL" id="BA000012">
    <property type="protein sequence ID" value="BAB50598.1"/>
    <property type="molecule type" value="Genomic_DNA"/>
</dbReference>
<dbReference type="RefSeq" id="WP_008834724.1">
    <property type="nucleotide sequence ID" value="NC_002678.2"/>
</dbReference>
<dbReference type="SMR" id="Q98FG9"/>
<dbReference type="GeneID" id="91563710"/>
<dbReference type="KEGG" id="mlo:msl3782"/>
<dbReference type="eggNOG" id="COG0333">
    <property type="taxonomic scope" value="Bacteria"/>
</dbReference>
<dbReference type="HOGENOM" id="CLU_129084_2_2_5"/>
<dbReference type="Proteomes" id="UP000000552">
    <property type="component" value="Chromosome"/>
</dbReference>
<dbReference type="GO" id="GO:0015934">
    <property type="term" value="C:large ribosomal subunit"/>
    <property type="evidence" value="ECO:0007669"/>
    <property type="project" value="InterPro"/>
</dbReference>
<dbReference type="GO" id="GO:0003735">
    <property type="term" value="F:structural constituent of ribosome"/>
    <property type="evidence" value="ECO:0007669"/>
    <property type="project" value="InterPro"/>
</dbReference>
<dbReference type="GO" id="GO:0006412">
    <property type="term" value="P:translation"/>
    <property type="evidence" value="ECO:0007669"/>
    <property type="project" value="UniProtKB-UniRule"/>
</dbReference>
<dbReference type="Gene3D" id="1.20.5.640">
    <property type="entry name" value="Single helix bin"/>
    <property type="match status" value="1"/>
</dbReference>
<dbReference type="HAMAP" id="MF_00340">
    <property type="entry name" value="Ribosomal_bL32"/>
    <property type="match status" value="1"/>
</dbReference>
<dbReference type="InterPro" id="IPR002677">
    <property type="entry name" value="Ribosomal_bL32"/>
</dbReference>
<dbReference type="InterPro" id="IPR044957">
    <property type="entry name" value="Ribosomal_bL32_bact"/>
</dbReference>
<dbReference type="InterPro" id="IPR011332">
    <property type="entry name" value="Ribosomal_zn-bd"/>
</dbReference>
<dbReference type="NCBIfam" id="TIGR01031">
    <property type="entry name" value="rpmF_bact"/>
    <property type="match status" value="1"/>
</dbReference>
<dbReference type="PANTHER" id="PTHR35534">
    <property type="entry name" value="50S RIBOSOMAL PROTEIN L32"/>
    <property type="match status" value="1"/>
</dbReference>
<dbReference type="PANTHER" id="PTHR35534:SF1">
    <property type="entry name" value="LARGE RIBOSOMAL SUBUNIT PROTEIN BL32"/>
    <property type="match status" value="1"/>
</dbReference>
<dbReference type="Pfam" id="PF01783">
    <property type="entry name" value="Ribosomal_L32p"/>
    <property type="match status" value="1"/>
</dbReference>
<dbReference type="SUPFAM" id="SSF57829">
    <property type="entry name" value="Zn-binding ribosomal proteins"/>
    <property type="match status" value="1"/>
</dbReference>
<organism>
    <name type="scientific">Mesorhizobium japonicum (strain LMG 29417 / CECT 9101 / MAFF 303099)</name>
    <name type="common">Mesorhizobium loti (strain MAFF 303099)</name>
    <dbReference type="NCBI Taxonomy" id="266835"/>
    <lineage>
        <taxon>Bacteria</taxon>
        <taxon>Pseudomonadati</taxon>
        <taxon>Pseudomonadota</taxon>
        <taxon>Alphaproteobacteria</taxon>
        <taxon>Hyphomicrobiales</taxon>
        <taxon>Phyllobacteriaceae</taxon>
        <taxon>Mesorhizobium</taxon>
    </lineage>
</organism>
<accession>Q98FG9</accession>
<proteinExistence type="inferred from homology"/>